<organism>
    <name type="scientific">Pyrobaculum aerophilum (strain ATCC 51768 / DSM 7523 / JCM 9630 / CIP 104966 / NBRC 100827 / IM2)</name>
    <dbReference type="NCBI Taxonomy" id="178306"/>
    <lineage>
        <taxon>Archaea</taxon>
        <taxon>Thermoproteota</taxon>
        <taxon>Thermoprotei</taxon>
        <taxon>Thermoproteales</taxon>
        <taxon>Thermoproteaceae</taxon>
        <taxon>Pyrobaculum</taxon>
    </lineage>
</organism>
<gene>
    <name type="ordered locus">PAE2160</name>
</gene>
<evidence type="ECO:0000255" key="1">
    <source>
        <dbReference type="HAMAP-Rule" id="MF_00457"/>
    </source>
</evidence>
<feature type="chain" id="PRO_0000156397" description="UPF0173 metal-dependent hydrolase PAE2160">
    <location>
        <begin position="1"/>
        <end position="225"/>
    </location>
</feature>
<comment type="similarity">
    <text evidence="1">Belongs to the UPF0173 family.</text>
</comment>
<dbReference type="EMBL" id="AE009441">
    <property type="protein sequence ID" value="AAL63992.1"/>
    <property type="molecule type" value="Genomic_DNA"/>
</dbReference>
<dbReference type="RefSeq" id="WP_011008460.1">
    <property type="nucleotide sequence ID" value="NC_003364.1"/>
</dbReference>
<dbReference type="SMR" id="Q8ZVR4"/>
<dbReference type="FunCoup" id="Q8ZVR4">
    <property type="interactions" value="8"/>
</dbReference>
<dbReference type="STRING" id="178306.PAE2160"/>
<dbReference type="EnsemblBacteria" id="AAL63992">
    <property type="protein sequence ID" value="AAL63992"/>
    <property type="gene ID" value="PAE2160"/>
</dbReference>
<dbReference type="GeneID" id="1464325"/>
<dbReference type="KEGG" id="pai:PAE2160"/>
<dbReference type="PATRIC" id="fig|178306.9.peg.1598"/>
<dbReference type="eggNOG" id="arCOG00497">
    <property type="taxonomic scope" value="Archaea"/>
</dbReference>
<dbReference type="HOGENOM" id="CLU_070010_4_0_2"/>
<dbReference type="InParanoid" id="Q8ZVR4"/>
<dbReference type="Proteomes" id="UP000002439">
    <property type="component" value="Chromosome"/>
</dbReference>
<dbReference type="GO" id="GO:0016787">
    <property type="term" value="F:hydrolase activity"/>
    <property type="evidence" value="ECO:0000318"/>
    <property type="project" value="GO_Central"/>
</dbReference>
<dbReference type="Gene3D" id="3.60.15.10">
    <property type="entry name" value="Ribonuclease Z/Hydroxyacylglutathione hydrolase-like"/>
    <property type="match status" value="1"/>
</dbReference>
<dbReference type="HAMAP" id="MF_00457">
    <property type="entry name" value="UPF0173"/>
    <property type="match status" value="1"/>
</dbReference>
<dbReference type="InterPro" id="IPR001279">
    <property type="entry name" value="Metallo-B-lactamas"/>
</dbReference>
<dbReference type="InterPro" id="IPR036866">
    <property type="entry name" value="RibonucZ/Hydroxyglut_hydro"/>
</dbReference>
<dbReference type="InterPro" id="IPR022877">
    <property type="entry name" value="UPF0173"/>
</dbReference>
<dbReference type="InterPro" id="IPR050114">
    <property type="entry name" value="UPF0173_UPF0282_UlaG_hydrolase"/>
</dbReference>
<dbReference type="NCBIfam" id="NF001911">
    <property type="entry name" value="PRK00685.1"/>
    <property type="match status" value="1"/>
</dbReference>
<dbReference type="PANTHER" id="PTHR43546:SF3">
    <property type="entry name" value="UPF0173 METAL-DEPENDENT HYDROLASE MJ1163"/>
    <property type="match status" value="1"/>
</dbReference>
<dbReference type="PANTHER" id="PTHR43546">
    <property type="entry name" value="UPF0173 METAL-DEPENDENT HYDROLASE MJ1163-RELATED"/>
    <property type="match status" value="1"/>
</dbReference>
<dbReference type="Pfam" id="PF12706">
    <property type="entry name" value="Lactamase_B_2"/>
    <property type="match status" value="1"/>
</dbReference>
<dbReference type="SMART" id="SM00849">
    <property type="entry name" value="Lactamase_B"/>
    <property type="match status" value="1"/>
</dbReference>
<dbReference type="SUPFAM" id="SSF56281">
    <property type="entry name" value="Metallo-hydrolase/oxidoreductase"/>
    <property type="match status" value="1"/>
</dbReference>
<keyword id="KW-0378">Hydrolase</keyword>
<keyword id="KW-1185">Reference proteome</keyword>
<sequence length="225" mass="24538">MQIKWFGHAAFMVEVGGARLLIDPWISNPLSPATPQDVINARPTHIMITHDHFDHMGEAVDIAKATKAPIVGTFELTLEVAEKGIPEAQTMPMNIGGTIKLGDGIELYMTPALHTANRGAPSGFVIATPEGTVYHAGDTALFRDMELIGELYDIDVALLPIGSVFTMGPREAAIATQLLRARRVVPMHYNTFPLIKQDPEDFKARVEAVSRAKVFVMKPGDVLKV</sequence>
<reference key="1">
    <citation type="journal article" date="2002" name="Proc. Natl. Acad. Sci. U.S.A.">
        <title>Genome sequence of the hyperthermophilic crenarchaeon Pyrobaculum aerophilum.</title>
        <authorList>
            <person name="Fitz-Gibbon S.T."/>
            <person name="Ladner H."/>
            <person name="Kim U.-J."/>
            <person name="Stetter K.O."/>
            <person name="Simon M.I."/>
            <person name="Miller J.H."/>
        </authorList>
    </citation>
    <scope>NUCLEOTIDE SEQUENCE [LARGE SCALE GENOMIC DNA]</scope>
    <source>
        <strain>ATCC 51768 / DSM 7523 / JCM 9630 / CIP 104966 / NBRC 100827 / IM2</strain>
    </source>
</reference>
<protein>
    <recommendedName>
        <fullName evidence="1">UPF0173 metal-dependent hydrolase PAE2160</fullName>
    </recommendedName>
</protein>
<accession>Q8ZVR4</accession>
<proteinExistence type="inferred from homology"/>
<name>Y2160_PYRAE</name>